<keyword id="KW-0998">Cell outer membrane</keyword>
<keyword id="KW-0133">Cell shape</keyword>
<keyword id="KW-1015">Disulfide bond</keyword>
<keyword id="KW-0406">Ion transport</keyword>
<keyword id="KW-0472">Membrane</keyword>
<keyword id="KW-0626">Porin</keyword>
<keyword id="KW-0732">Signal</keyword>
<keyword id="KW-0812">Transmembrane</keyword>
<keyword id="KW-1134">Transmembrane beta strand</keyword>
<keyword id="KW-0813">Transport</keyword>
<protein>
    <recommendedName>
        <fullName>Major outer membrane porin</fullName>
        <shortName>MOMP</shortName>
    </recommendedName>
</protein>
<gene>
    <name type="primary">ompA</name>
    <name type="synonym">omp1</name>
    <name type="ordered locus">CAB048</name>
</gene>
<reference key="1">
    <citation type="journal article" date="1989" name="FEMS Microbiol. Lett.">
        <title>Sequence analysis of the major outer membrane protein gene of an ovine abortion strain of Chlamydia psittaci.</title>
        <authorList>
            <person name="Herring A.J."/>
            <person name="Tan T.W."/>
            <person name="Baxter S."/>
            <person name="Inglis N.F."/>
            <person name="Dunbar S."/>
        </authorList>
    </citation>
    <scope>NUCLEOTIDE SEQUENCE [GENOMIC DNA]</scope>
    <source>
        <strain>DSM 27085 / S26/3</strain>
    </source>
</reference>
<reference key="2">
    <citation type="journal article" date="1995" name="Br. Vet. J.">
        <title>Epizootic bovine abortion in a dairy herd: characterization of a Chlamydia psittaci isolate and antibody response.</title>
        <authorList>
            <person name="Griffiths P.C."/>
            <person name="Plater J.M."/>
            <person name="Martin T.C."/>
            <person name="Hughes S.L."/>
            <person name="Hughes K.J."/>
            <person name="Hewinson R.G."/>
            <person name="Dawson M."/>
        </authorList>
    </citation>
    <scope>NUCLEOTIDE SEQUENCE [GENOMIC DNA]</scope>
    <source>
        <strain>Bovine abortion isolate BA1</strain>
    </source>
</reference>
<reference key="3">
    <citation type="journal article" date="2005" name="Genome Res.">
        <title>The Chlamydophila abortus genome sequence reveals an array of variable proteins that contribute to interspecies variation.</title>
        <authorList>
            <person name="Thomson N.R."/>
            <person name="Yeats C."/>
            <person name="Bell K."/>
            <person name="Holden M.T.G."/>
            <person name="Bentley S.D."/>
            <person name="Livingstone M."/>
            <person name="Cerdeno-Tarraga A.-M."/>
            <person name="Harris B."/>
            <person name="Doggett J."/>
            <person name="Ormond D."/>
            <person name="Mungall K."/>
            <person name="Clarke K."/>
            <person name="Feltwell T."/>
            <person name="Hance Z."/>
            <person name="Sanders M."/>
            <person name="Quail M.A."/>
            <person name="Price C."/>
            <person name="Barrell B.G."/>
            <person name="Parkhill J."/>
            <person name="Longbottom D."/>
        </authorList>
    </citation>
    <scope>NUCLEOTIDE SEQUENCE [LARGE SCALE GENOMIC DNA]</scope>
    <source>
        <strain>DSM 27085 / S26/3</strain>
    </source>
</reference>
<sequence length="389" mass="41884">MKKLLKSALLFAATGSALSLQALPVGNPAEPSLLIDGTMWEGASGDPCDPCSTWCDAISIRAGYYGDYVFDRVLKVDVNKTITGMGAVPTGTAAANYKTPTDRPNIAYGKHLQDAEWFTNAAFLALNIWDRFDIFCTLGASNGYFKASSAAFNLVGLIGVKGSSIAADQLPNVGITQGIVEFYTDTTFSWSVGARGALWECGCATLGAEFQYAQSNPKIEMLNVVSSPAQFVVHKPRGYKGTAFPLPLTAGTDQATDTKSATIKYHEWQVGLALSYRLNMLVPYISVNWSRATFDADAIRIAQPKLAAAVLNLTTWNPTLLGEATALDTSNKFADFLQIASIQINKMKSRKACGVAVGATLIDADKWSITGEARLINERAAHMNAQFRF</sequence>
<comment type="function">
    <text evidence="1">In elementary bodies (EBs, the infectious stage, which is able to survive outside the host cell) provides the structural integrity of the outer envelope through disulfide cross-links with the small cysteine-rich protein and the large cysteine-rich periplasmic protein. It has been described in publications as the Sarkosyl-insoluble COMC (Chlamydia outer membrane complex), and serves as the functional equivalent of peptidoglycan (By similarity).</text>
</comment>
<comment type="function">
    <text evidence="1">Permits diffusion of specific solutes through the outer membrane.</text>
</comment>
<comment type="subunit">
    <text>Part of a disulfide cross-linked outer membrane complex (COMC) composed of the major outer membrane porin (MOMP), the small cysteine-rich protein (OmcA) and the large cysteine-rich periplasmic protein (OmcB).</text>
</comment>
<comment type="subcellular location">
    <subcellularLocation>
        <location evidence="1">Cell outer membrane</location>
        <topology evidence="1">Multi-pass membrane protein</topology>
    </subcellularLocation>
</comment>
<comment type="developmental stage">
    <text>It is present but some of the disulfide bonds are reduced in reticulate bodies (RBs).</text>
</comment>
<comment type="similarity">
    <text evidence="2">Belongs to the chlamydial porin (CP) (TC 1.B.2) family.</text>
</comment>
<proteinExistence type="evidence at transcript level"/>
<accession>P16567</accession>
<accession>Q5L762</accession>
<evidence type="ECO:0000250" key="1"/>
<evidence type="ECO:0000305" key="2"/>
<dbReference type="EMBL" id="X51859">
    <property type="protein sequence ID" value="CAA36152.1"/>
    <property type="molecule type" value="Genomic_DNA"/>
</dbReference>
<dbReference type="EMBL" id="L39020">
    <property type="protein sequence ID" value="AAB02850.1"/>
    <property type="molecule type" value="Genomic_DNA"/>
</dbReference>
<dbReference type="EMBL" id="CR848038">
    <property type="protein sequence ID" value="CAH63506.1"/>
    <property type="molecule type" value="Genomic_DNA"/>
</dbReference>
<dbReference type="PIR" id="S08770">
    <property type="entry name" value="MMCWP3"/>
</dbReference>
<dbReference type="RefSeq" id="WP_011096793.1">
    <property type="nucleotide sequence ID" value="NC_004552.2"/>
</dbReference>
<dbReference type="KEGG" id="cab:CAB048"/>
<dbReference type="eggNOG" id="ENOG502ZVFZ">
    <property type="taxonomic scope" value="Bacteria"/>
</dbReference>
<dbReference type="HOGENOM" id="CLU_693881_0_0_0"/>
<dbReference type="OrthoDB" id="18912at2"/>
<dbReference type="Proteomes" id="UP000001012">
    <property type="component" value="Chromosome"/>
</dbReference>
<dbReference type="GO" id="GO:0009279">
    <property type="term" value="C:cell outer membrane"/>
    <property type="evidence" value="ECO:0007669"/>
    <property type="project" value="UniProtKB-SubCell"/>
</dbReference>
<dbReference type="GO" id="GO:0046930">
    <property type="term" value="C:pore complex"/>
    <property type="evidence" value="ECO:0007669"/>
    <property type="project" value="UniProtKB-KW"/>
</dbReference>
<dbReference type="GO" id="GO:0015288">
    <property type="term" value="F:porin activity"/>
    <property type="evidence" value="ECO:0007669"/>
    <property type="project" value="UniProtKB-KW"/>
</dbReference>
<dbReference type="GO" id="GO:0005198">
    <property type="term" value="F:structural molecule activity"/>
    <property type="evidence" value="ECO:0007669"/>
    <property type="project" value="InterPro"/>
</dbReference>
<dbReference type="GO" id="GO:0006811">
    <property type="term" value="P:monoatomic ion transport"/>
    <property type="evidence" value="ECO:0007669"/>
    <property type="project" value="UniProtKB-KW"/>
</dbReference>
<dbReference type="GO" id="GO:0008360">
    <property type="term" value="P:regulation of cell shape"/>
    <property type="evidence" value="ECO:0007669"/>
    <property type="project" value="UniProtKB-KW"/>
</dbReference>
<dbReference type="InterPro" id="IPR000604">
    <property type="entry name" value="Major_OMP_Chlamydia"/>
</dbReference>
<dbReference type="Pfam" id="PF01308">
    <property type="entry name" value="Chlam_OMP"/>
    <property type="match status" value="1"/>
</dbReference>
<dbReference type="PRINTS" id="PR01334">
    <property type="entry name" value="CHLAMIDIAOMP"/>
</dbReference>
<feature type="signal peptide">
    <location>
        <begin position="1"/>
        <end position="22"/>
    </location>
</feature>
<feature type="chain" id="PRO_0000020138" description="Major outer membrane porin">
    <location>
        <begin position="23"/>
        <end position="389"/>
    </location>
</feature>
<name>MOMP_CHLAB</name>
<organism>
    <name type="scientific">Chlamydia abortus (strain DSM 27085 / S26/3)</name>
    <name type="common">Chlamydophila abortus</name>
    <dbReference type="NCBI Taxonomy" id="218497"/>
    <lineage>
        <taxon>Bacteria</taxon>
        <taxon>Pseudomonadati</taxon>
        <taxon>Chlamydiota</taxon>
        <taxon>Chlamydiia</taxon>
        <taxon>Chlamydiales</taxon>
        <taxon>Chlamydiaceae</taxon>
        <taxon>Chlamydia/Chlamydophila group</taxon>
        <taxon>Chlamydia</taxon>
    </lineage>
</organism>